<evidence type="ECO:0000255" key="1">
    <source>
        <dbReference type="HAMAP-Rule" id="MF_00074"/>
    </source>
</evidence>
<organism>
    <name type="scientific">Laribacter hongkongensis (strain HLHK9)</name>
    <dbReference type="NCBI Taxonomy" id="557598"/>
    <lineage>
        <taxon>Bacteria</taxon>
        <taxon>Pseudomonadati</taxon>
        <taxon>Pseudomonadota</taxon>
        <taxon>Betaproteobacteria</taxon>
        <taxon>Neisseriales</taxon>
        <taxon>Aquaspirillaceae</taxon>
        <taxon>Laribacter</taxon>
    </lineage>
</organism>
<name>RSMG_LARHH</name>
<comment type="function">
    <text evidence="1">Specifically methylates the N7 position of guanine in position 527 of 16S rRNA.</text>
</comment>
<comment type="catalytic activity">
    <reaction evidence="1">
        <text>guanosine(527) in 16S rRNA + S-adenosyl-L-methionine = N(7)-methylguanosine(527) in 16S rRNA + S-adenosyl-L-homocysteine</text>
        <dbReference type="Rhea" id="RHEA:42732"/>
        <dbReference type="Rhea" id="RHEA-COMP:10209"/>
        <dbReference type="Rhea" id="RHEA-COMP:10210"/>
        <dbReference type="ChEBI" id="CHEBI:57856"/>
        <dbReference type="ChEBI" id="CHEBI:59789"/>
        <dbReference type="ChEBI" id="CHEBI:74269"/>
        <dbReference type="ChEBI" id="CHEBI:74480"/>
        <dbReference type="EC" id="2.1.1.170"/>
    </reaction>
</comment>
<comment type="subcellular location">
    <subcellularLocation>
        <location evidence="1">Cytoplasm</location>
    </subcellularLocation>
</comment>
<comment type="similarity">
    <text evidence="1">Belongs to the methyltransferase superfamily. RNA methyltransferase RsmG family.</text>
</comment>
<keyword id="KW-0963">Cytoplasm</keyword>
<keyword id="KW-0489">Methyltransferase</keyword>
<keyword id="KW-1185">Reference proteome</keyword>
<keyword id="KW-0698">rRNA processing</keyword>
<keyword id="KW-0949">S-adenosyl-L-methionine</keyword>
<keyword id="KW-0808">Transferase</keyword>
<accession>C1D5H2</accession>
<gene>
    <name evidence="1" type="primary">rsmG</name>
    <name type="ordered locus">LHK_03011</name>
</gene>
<proteinExistence type="inferred from homology"/>
<sequence>MNLKEELKAGLAELGLALSAPQELLLVHYVELLDKWNRVYNLTAVRETGRMLSYHVLDSLAALPLVAGQRILDVGSGGGMPGIPFAISQPDWSLTLLDANHKKTTFLKQAVIELGLTNTEVVCERVEAFQPERKFDVITSRAFSDLAEFVRLTRHLLAEGGEWAALKGVYPDEEIAQLPEDVCVREVIELKVPGLDAERHLVKLGLR</sequence>
<dbReference type="EC" id="2.1.1.170" evidence="1"/>
<dbReference type="EMBL" id="CP001154">
    <property type="protein sequence ID" value="ACO75989.1"/>
    <property type="molecule type" value="Genomic_DNA"/>
</dbReference>
<dbReference type="RefSeq" id="WP_012698452.1">
    <property type="nucleotide sequence ID" value="NC_012559.1"/>
</dbReference>
<dbReference type="SMR" id="C1D5H2"/>
<dbReference type="STRING" id="557598.LHK_03011"/>
<dbReference type="GeneID" id="75108231"/>
<dbReference type="KEGG" id="lhk:LHK_03011"/>
<dbReference type="eggNOG" id="COG0357">
    <property type="taxonomic scope" value="Bacteria"/>
</dbReference>
<dbReference type="HOGENOM" id="CLU_065341_2_0_4"/>
<dbReference type="Proteomes" id="UP000002010">
    <property type="component" value="Chromosome"/>
</dbReference>
<dbReference type="GO" id="GO:0005829">
    <property type="term" value="C:cytosol"/>
    <property type="evidence" value="ECO:0007669"/>
    <property type="project" value="TreeGrafter"/>
</dbReference>
<dbReference type="GO" id="GO:0070043">
    <property type="term" value="F:rRNA (guanine-N7-)-methyltransferase activity"/>
    <property type="evidence" value="ECO:0007669"/>
    <property type="project" value="UniProtKB-UniRule"/>
</dbReference>
<dbReference type="CDD" id="cd02440">
    <property type="entry name" value="AdoMet_MTases"/>
    <property type="match status" value="1"/>
</dbReference>
<dbReference type="Gene3D" id="3.40.50.150">
    <property type="entry name" value="Vaccinia Virus protein VP39"/>
    <property type="match status" value="1"/>
</dbReference>
<dbReference type="HAMAP" id="MF_00074">
    <property type="entry name" value="16SrRNA_methyltr_G"/>
    <property type="match status" value="1"/>
</dbReference>
<dbReference type="InterPro" id="IPR003682">
    <property type="entry name" value="rRNA_ssu_MeTfrase_G"/>
</dbReference>
<dbReference type="InterPro" id="IPR029063">
    <property type="entry name" value="SAM-dependent_MTases_sf"/>
</dbReference>
<dbReference type="NCBIfam" id="TIGR00138">
    <property type="entry name" value="rsmG_gidB"/>
    <property type="match status" value="1"/>
</dbReference>
<dbReference type="PANTHER" id="PTHR31760">
    <property type="entry name" value="S-ADENOSYL-L-METHIONINE-DEPENDENT METHYLTRANSFERASES SUPERFAMILY PROTEIN"/>
    <property type="match status" value="1"/>
</dbReference>
<dbReference type="PANTHER" id="PTHR31760:SF0">
    <property type="entry name" value="S-ADENOSYL-L-METHIONINE-DEPENDENT METHYLTRANSFERASES SUPERFAMILY PROTEIN"/>
    <property type="match status" value="1"/>
</dbReference>
<dbReference type="Pfam" id="PF02527">
    <property type="entry name" value="GidB"/>
    <property type="match status" value="1"/>
</dbReference>
<dbReference type="PIRSF" id="PIRSF003078">
    <property type="entry name" value="GidB"/>
    <property type="match status" value="1"/>
</dbReference>
<dbReference type="SUPFAM" id="SSF53335">
    <property type="entry name" value="S-adenosyl-L-methionine-dependent methyltransferases"/>
    <property type="match status" value="1"/>
</dbReference>
<protein>
    <recommendedName>
        <fullName evidence="1">Ribosomal RNA small subunit methyltransferase G</fullName>
        <ecNumber evidence="1">2.1.1.170</ecNumber>
    </recommendedName>
    <alternativeName>
        <fullName evidence="1">16S rRNA 7-methylguanosine methyltransferase</fullName>
        <shortName evidence="1">16S rRNA m7G methyltransferase</shortName>
    </alternativeName>
</protein>
<reference key="1">
    <citation type="journal article" date="2009" name="PLoS Genet.">
        <title>The complete genome and proteome of Laribacter hongkongensis reveal potential mechanisms for adaptations to different temperatures and habitats.</title>
        <authorList>
            <person name="Woo P.C.Y."/>
            <person name="Lau S.K.P."/>
            <person name="Tse H."/>
            <person name="Teng J.L.L."/>
            <person name="Curreem S.O."/>
            <person name="Tsang A.K.L."/>
            <person name="Fan R.Y.Y."/>
            <person name="Wong G.K.M."/>
            <person name="Huang Y."/>
            <person name="Loman N.J."/>
            <person name="Snyder L.A.S."/>
            <person name="Cai J.J."/>
            <person name="Huang J.-D."/>
            <person name="Mak W."/>
            <person name="Pallen M.J."/>
            <person name="Lok S."/>
            <person name="Yuen K.-Y."/>
        </authorList>
    </citation>
    <scope>NUCLEOTIDE SEQUENCE [LARGE SCALE GENOMIC DNA]</scope>
    <source>
        <strain>HLHK9</strain>
    </source>
</reference>
<feature type="chain" id="PRO_1000118190" description="Ribosomal RNA small subunit methyltransferase G">
    <location>
        <begin position="1"/>
        <end position="207"/>
    </location>
</feature>
<feature type="binding site" evidence="1">
    <location>
        <position position="75"/>
    </location>
    <ligand>
        <name>S-adenosyl-L-methionine</name>
        <dbReference type="ChEBI" id="CHEBI:59789"/>
    </ligand>
</feature>
<feature type="binding site" evidence="1">
    <location>
        <position position="80"/>
    </location>
    <ligand>
        <name>S-adenosyl-L-methionine</name>
        <dbReference type="ChEBI" id="CHEBI:59789"/>
    </ligand>
</feature>
<feature type="binding site" evidence="1">
    <location>
        <begin position="126"/>
        <end position="127"/>
    </location>
    <ligand>
        <name>S-adenosyl-L-methionine</name>
        <dbReference type="ChEBI" id="CHEBI:59789"/>
    </ligand>
</feature>
<feature type="binding site" evidence="1">
    <location>
        <position position="141"/>
    </location>
    <ligand>
        <name>S-adenosyl-L-methionine</name>
        <dbReference type="ChEBI" id="CHEBI:59789"/>
    </ligand>
</feature>